<accession>Q1QQT4</accession>
<sequence length="160" mass="17721">MRLVVIAIGRLKQGPERELADRYRGRFDDIGRKLGFRGFDVHEIPESRARDAKQRIREEAAAILALAPEGAVLVALDEKGKNIDSAAFADHLGRWRDESVTSTVFAVGGADGLSPELRRKARLSVAFGAATWPHQIVRVMLLEQIYRAATILAGHPYHRG</sequence>
<comment type="function">
    <text evidence="1">Specifically methylates the pseudouridine at position 1915 (m3Psi1915) in 23S rRNA.</text>
</comment>
<comment type="catalytic activity">
    <reaction evidence="1">
        <text>pseudouridine(1915) in 23S rRNA + S-adenosyl-L-methionine = N(3)-methylpseudouridine(1915) in 23S rRNA + S-adenosyl-L-homocysteine + H(+)</text>
        <dbReference type="Rhea" id="RHEA:42752"/>
        <dbReference type="Rhea" id="RHEA-COMP:10221"/>
        <dbReference type="Rhea" id="RHEA-COMP:10222"/>
        <dbReference type="ChEBI" id="CHEBI:15378"/>
        <dbReference type="ChEBI" id="CHEBI:57856"/>
        <dbReference type="ChEBI" id="CHEBI:59789"/>
        <dbReference type="ChEBI" id="CHEBI:65314"/>
        <dbReference type="ChEBI" id="CHEBI:74486"/>
        <dbReference type="EC" id="2.1.1.177"/>
    </reaction>
</comment>
<comment type="subunit">
    <text evidence="1">Homodimer.</text>
</comment>
<comment type="subcellular location">
    <subcellularLocation>
        <location evidence="1">Cytoplasm</location>
    </subcellularLocation>
</comment>
<comment type="similarity">
    <text evidence="1">Belongs to the RNA methyltransferase RlmH family.</text>
</comment>
<evidence type="ECO:0000255" key="1">
    <source>
        <dbReference type="HAMAP-Rule" id="MF_00658"/>
    </source>
</evidence>
<keyword id="KW-0963">Cytoplasm</keyword>
<keyword id="KW-0489">Methyltransferase</keyword>
<keyword id="KW-1185">Reference proteome</keyword>
<keyword id="KW-0698">rRNA processing</keyword>
<keyword id="KW-0949">S-adenosyl-L-methionine</keyword>
<keyword id="KW-0808">Transferase</keyword>
<gene>
    <name evidence="1" type="primary">rlmH</name>
    <name type="ordered locus">Nham_0523</name>
</gene>
<feature type="chain" id="PRO_0000260575" description="Ribosomal RNA large subunit methyltransferase H">
    <location>
        <begin position="1"/>
        <end position="160"/>
    </location>
</feature>
<feature type="binding site" evidence="1">
    <location>
        <position position="76"/>
    </location>
    <ligand>
        <name>S-adenosyl-L-methionine</name>
        <dbReference type="ChEBI" id="CHEBI:59789"/>
    </ligand>
</feature>
<feature type="binding site" evidence="1">
    <location>
        <position position="108"/>
    </location>
    <ligand>
        <name>S-adenosyl-L-methionine</name>
        <dbReference type="ChEBI" id="CHEBI:59789"/>
    </ligand>
</feature>
<protein>
    <recommendedName>
        <fullName evidence="1">Ribosomal RNA large subunit methyltransferase H</fullName>
        <ecNumber evidence="1">2.1.1.177</ecNumber>
    </recommendedName>
    <alternativeName>
        <fullName evidence="1">23S rRNA (pseudouridine1915-N3)-methyltransferase</fullName>
    </alternativeName>
    <alternativeName>
        <fullName evidence="1">23S rRNA m3Psi1915 methyltransferase</fullName>
    </alternativeName>
    <alternativeName>
        <fullName evidence="1">rRNA (pseudouridine-N3-)-methyltransferase RlmH</fullName>
    </alternativeName>
</protein>
<organism>
    <name type="scientific">Nitrobacter hamburgensis (strain DSM 10229 / NCIMB 13809 / X14)</name>
    <dbReference type="NCBI Taxonomy" id="323097"/>
    <lineage>
        <taxon>Bacteria</taxon>
        <taxon>Pseudomonadati</taxon>
        <taxon>Pseudomonadota</taxon>
        <taxon>Alphaproteobacteria</taxon>
        <taxon>Hyphomicrobiales</taxon>
        <taxon>Nitrobacteraceae</taxon>
        <taxon>Nitrobacter</taxon>
    </lineage>
</organism>
<proteinExistence type="inferred from homology"/>
<reference key="1">
    <citation type="submission" date="2006-03" db="EMBL/GenBank/DDBJ databases">
        <title>Complete sequence of chromosome of Nitrobacter hamburgensis X14.</title>
        <authorList>
            <consortium name="US DOE Joint Genome Institute"/>
            <person name="Copeland A."/>
            <person name="Lucas S."/>
            <person name="Lapidus A."/>
            <person name="Barry K."/>
            <person name="Detter J.C."/>
            <person name="Glavina del Rio T."/>
            <person name="Hammon N."/>
            <person name="Israni S."/>
            <person name="Dalin E."/>
            <person name="Tice H."/>
            <person name="Pitluck S."/>
            <person name="Chain P."/>
            <person name="Malfatti S."/>
            <person name="Shin M."/>
            <person name="Vergez L."/>
            <person name="Schmutz J."/>
            <person name="Larimer F."/>
            <person name="Land M."/>
            <person name="Hauser L."/>
            <person name="Kyrpides N."/>
            <person name="Ivanova N."/>
            <person name="Ward B."/>
            <person name="Arp D."/>
            <person name="Klotz M."/>
            <person name="Stein L."/>
            <person name="O'Mullan G."/>
            <person name="Starkenburg S."/>
            <person name="Sayavedra L."/>
            <person name="Poret-Peterson A.T."/>
            <person name="Gentry M.E."/>
            <person name="Bruce D."/>
            <person name="Richardson P."/>
        </authorList>
    </citation>
    <scope>NUCLEOTIDE SEQUENCE [LARGE SCALE GENOMIC DNA]</scope>
    <source>
        <strain>DSM 10229 / NCIMB 13809 / X14</strain>
    </source>
</reference>
<dbReference type="EC" id="2.1.1.177" evidence="1"/>
<dbReference type="EMBL" id="CP000319">
    <property type="protein sequence ID" value="ABE61413.1"/>
    <property type="molecule type" value="Genomic_DNA"/>
</dbReference>
<dbReference type="RefSeq" id="WP_011509117.1">
    <property type="nucleotide sequence ID" value="NC_007964.1"/>
</dbReference>
<dbReference type="SMR" id="Q1QQT4"/>
<dbReference type="STRING" id="323097.Nham_0523"/>
<dbReference type="KEGG" id="nha:Nham_0523"/>
<dbReference type="eggNOG" id="COG1576">
    <property type="taxonomic scope" value="Bacteria"/>
</dbReference>
<dbReference type="HOGENOM" id="CLU_100552_1_1_5"/>
<dbReference type="OrthoDB" id="9806643at2"/>
<dbReference type="Proteomes" id="UP000001953">
    <property type="component" value="Chromosome"/>
</dbReference>
<dbReference type="GO" id="GO:0005737">
    <property type="term" value="C:cytoplasm"/>
    <property type="evidence" value="ECO:0007669"/>
    <property type="project" value="UniProtKB-SubCell"/>
</dbReference>
<dbReference type="GO" id="GO:0070038">
    <property type="term" value="F:rRNA (pseudouridine-N3-)-methyltransferase activity"/>
    <property type="evidence" value="ECO:0007669"/>
    <property type="project" value="UniProtKB-UniRule"/>
</dbReference>
<dbReference type="CDD" id="cd18081">
    <property type="entry name" value="RlmH-like"/>
    <property type="match status" value="1"/>
</dbReference>
<dbReference type="Gene3D" id="3.40.1280.10">
    <property type="match status" value="1"/>
</dbReference>
<dbReference type="HAMAP" id="MF_00658">
    <property type="entry name" value="23SrRNA_methyltr_H"/>
    <property type="match status" value="1"/>
</dbReference>
<dbReference type="InterPro" id="IPR029028">
    <property type="entry name" value="Alpha/beta_knot_MTases"/>
</dbReference>
<dbReference type="InterPro" id="IPR003742">
    <property type="entry name" value="RlmH-like"/>
</dbReference>
<dbReference type="InterPro" id="IPR029026">
    <property type="entry name" value="tRNA_m1G_MTases_N"/>
</dbReference>
<dbReference type="NCBIfam" id="NF000989">
    <property type="entry name" value="PRK00103.2-3"/>
    <property type="match status" value="1"/>
</dbReference>
<dbReference type="NCBIfam" id="NF000991">
    <property type="entry name" value="PRK00103.2-5"/>
    <property type="match status" value="1"/>
</dbReference>
<dbReference type="PANTHER" id="PTHR33603">
    <property type="entry name" value="METHYLTRANSFERASE"/>
    <property type="match status" value="1"/>
</dbReference>
<dbReference type="PANTHER" id="PTHR33603:SF1">
    <property type="entry name" value="RIBOSOMAL RNA LARGE SUBUNIT METHYLTRANSFERASE H"/>
    <property type="match status" value="1"/>
</dbReference>
<dbReference type="Pfam" id="PF02590">
    <property type="entry name" value="SPOUT_MTase"/>
    <property type="match status" value="1"/>
</dbReference>
<dbReference type="PIRSF" id="PIRSF004505">
    <property type="entry name" value="MT_bac"/>
    <property type="match status" value="1"/>
</dbReference>
<dbReference type="SUPFAM" id="SSF75217">
    <property type="entry name" value="alpha/beta knot"/>
    <property type="match status" value="1"/>
</dbReference>
<name>RLMH_NITHX</name>